<reference key="1">
    <citation type="submission" date="2006-08" db="EMBL/GenBank/DDBJ databases">
        <title>Complete sequence of Shewanella sp. MR-4.</title>
        <authorList>
            <consortium name="US DOE Joint Genome Institute"/>
            <person name="Copeland A."/>
            <person name="Lucas S."/>
            <person name="Lapidus A."/>
            <person name="Barry K."/>
            <person name="Detter J.C."/>
            <person name="Glavina del Rio T."/>
            <person name="Hammon N."/>
            <person name="Israni S."/>
            <person name="Dalin E."/>
            <person name="Tice H."/>
            <person name="Pitluck S."/>
            <person name="Kiss H."/>
            <person name="Brettin T."/>
            <person name="Bruce D."/>
            <person name="Han C."/>
            <person name="Tapia R."/>
            <person name="Gilna P."/>
            <person name="Schmutz J."/>
            <person name="Larimer F."/>
            <person name="Land M."/>
            <person name="Hauser L."/>
            <person name="Kyrpides N."/>
            <person name="Mikhailova N."/>
            <person name="Nealson K."/>
            <person name="Konstantinidis K."/>
            <person name="Klappenbach J."/>
            <person name="Tiedje J."/>
            <person name="Richardson P."/>
        </authorList>
    </citation>
    <scope>NUCLEOTIDE SEQUENCE [LARGE SCALE GENOMIC DNA]</scope>
    <source>
        <strain>MR-4</strain>
    </source>
</reference>
<comment type="function">
    <text evidence="1">An accessory protein needed during the final step in the assembly of 30S ribosomal subunit, possibly for assembly of the head region. Essential for efficient processing of 16S rRNA. May be needed both before and after RbfA during the maturation of 16S rRNA. It has affinity for free ribosomal 30S subunits but not for 70S ribosomes.</text>
</comment>
<comment type="subunit">
    <text evidence="1">Binds ribosomal protein uS19.</text>
</comment>
<comment type="subcellular location">
    <subcellularLocation>
        <location evidence="1">Cytoplasm</location>
    </subcellularLocation>
</comment>
<comment type="domain">
    <text evidence="1">The PRC barrel domain binds ribosomal protein uS19.</text>
</comment>
<comment type="similarity">
    <text evidence="1">Belongs to the RimM family.</text>
</comment>
<keyword id="KW-0143">Chaperone</keyword>
<keyword id="KW-0963">Cytoplasm</keyword>
<keyword id="KW-0690">Ribosome biogenesis</keyword>
<keyword id="KW-0698">rRNA processing</keyword>
<protein>
    <recommendedName>
        <fullName evidence="1">Ribosome maturation factor RimM</fullName>
    </recommendedName>
</protein>
<accession>Q0HGA9</accession>
<evidence type="ECO:0000255" key="1">
    <source>
        <dbReference type="HAMAP-Rule" id="MF_00014"/>
    </source>
</evidence>
<gene>
    <name evidence="1" type="primary">rimM</name>
    <name type="ordered locus">Shewmr4_2837</name>
</gene>
<dbReference type="EMBL" id="CP000446">
    <property type="protein sequence ID" value="ABI39908.1"/>
    <property type="molecule type" value="Genomic_DNA"/>
</dbReference>
<dbReference type="RefSeq" id="WP_011623587.1">
    <property type="nucleotide sequence ID" value="NC_008321.1"/>
</dbReference>
<dbReference type="SMR" id="Q0HGA9"/>
<dbReference type="KEGG" id="she:Shewmr4_2837"/>
<dbReference type="HOGENOM" id="CLU_077636_1_0_6"/>
<dbReference type="GO" id="GO:0005737">
    <property type="term" value="C:cytoplasm"/>
    <property type="evidence" value="ECO:0007669"/>
    <property type="project" value="UniProtKB-SubCell"/>
</dbReference>
<dbReference type="GO" id="GO:0005840">
    <property type="term" value="C:ribosome"/>
    <property type="evidence" value="ECO:0007669"/>
    <property type="project" value="InterPro"/>
</dbReference>
<dbReference type="GO" id="GO:0043022">
    <property type="term" value="F:ribosome binding"/>
    <property type="evidence" value="ECO:0007669"/>
    <property type="project" value="InterPro"/>
</dbReference>
<dbReference type="GO" id="GO:0042274">
    <property type="term" value="P:ribosomal small subunit biogenesis"/>
    <property type="evidence" value="ECO:0007669"/>
    <property type="project" value="UniProtKB-UniRule"/>
</dbReference>
<dbReference type="GO" id="GO:0006364">
    <property type="term" value="P:rRNA processing"/>
    <property type="evidence" value="ECO:0007669"/>
    <property type="project" value="UniProtKB-UniRule"/>
</dbReference>
<dbReference type="Gene3D" id="2.30.30.240">
    <property type="entry name" value="PRC-barrel domain"/>
    <property type="match status" value="1"/>
</dbReference>
<dbReference type="Gene3D" id="2.40.30.60">
    <property type="entry name" value="RimM"/>
    <property type="match status" value="1"/>
</dbReference>
<dbReference type="HAMAP" id="MF_00014">
    <property type="entry name" value="Ribosome_mat_RimM"/>
    <property type="match status" value="1"/>
</dbReference>
<dbReference type="InterPro" id="IPR027275">
    <property type="entry name" value="PRC-brl_dom"/>
</dbReference>
<dbReference type="InterPro" id="IPR011033">
    <property type="entry name" value="PRC_barrel-like_sf"/>
</dbReference>
<dbReference type="InterPro" id="IPR011961">
    <property type="entry name" value="RimM"/>
</dbReference>
<dbReference type="InterPro" id="IPR002676">
    <property type="entry name" value="RimM_N"/>
</dbReference>
<dbReference type="InterPro" id="IPR036976">
    <property type="entry name" value="RimM_N_sf"/>
</dbReference>
<dbReference type="InterPro" id="IPR009000">
    <property type="entry name" value="Transl_B-barrel_sf"/>
</dbReference>
<dbReference type="NCBIfam" id="TIGR02273">
    <property type="entry name" value="16S_RimM"/>
    <property type="match status" value="1"/>
</dbReference>
<dbReference type="PANTHER" id="PTHR33692">
    <property type="entry name" value="RIBOSOME MATURATION FACTOR RIMM"/>
    <property type="match status" value="1"/>
</dbReference>
<dbReference type="PANTHER" id="PTHR33692:SF1">
    <property type="entry name" value="RIBOSOME MATURATION FACTOR RIMM"/>
    <property type="match status" value="1"/>
</dbReference>
<dbReference type="Pfam" id="PF05239">
    <property type="entry name" value="PRC"/>
    <property type="match status" value="1"/>
</dbReference>
<dbReference type="Pfam" id="PF01782">
    <property type="entry name" value="RimM"/>
    <property type="match status" value="1"/>
</dbReference>
<dbReference type="SUPFAM" id="SSF50346">
    <property type="entry name" value="PRC-barrel domain"/>
    <property type="match status" value="1"/>
</dbReference>
<dbReference type="SUPFAM" id="SSF50447">
    <property type="entry name" value="Translation proteins"/>
    <property type="match status" value="1"/>
</dbReference>
<feature type="chain" id="PRO_0000321760" description="Ribosome maturation factor RimM">
    <location>
        <begin position="1"/>
        <end position="176"/>
    </location>
</feature>
<feature type="domain" description="PRC barrel" evidence="1">
    <location>
        <begin position="97"/>
        <end position="176"/>
    </location>
</feature>
<name>RIMM_SHESM</name>
<proteinExistence type="inferred from homology"/>
<sequence>MSSNQQPVVLGKLGSCHGIKGWLKITAYTDSVEGIFDYSPWLIKENGEWREVKVIQWRYQGKAVVAELEGVTTRERAQMLTNCEIGILPEQMNALPEDEFYWRDLIGCEVINTNGYNMGVVDQIVETGSNDVLLVKANAKDSFGKVERMLPFVPGQFILKVDIQGKQILVDWDPDF</sequence>
<organism>
    <name type="scientific">Shewanella sp. (strain MR-4)</name>
    <dbReference type="NCBI Taxonomy" id="60480"/>
    <lineage>
        <taxon>Bacteria</taxon>
        <taxon>Pseudomonadati</taxon>
        <taxon>Pseudomonadota</taxon>
        <taxon>Gammaproteobacteria</taxon>
        <taxon>Alteromonadales</taxon>
        <taxon>Shewanellaceae</taxon>
        <taxon>Shewanella</taxon>
    </lineage>
</organism>